<name>DEGPL_HAHCH</name>
<keyword id="KW-0378">Hydrolase</keyword>
<keyword id="KW-0574">Periplasm</keyword>
<keyword id="KW-0645">Protease</keyword>
<keyword id="KW-1185">Reference proteome</keyword>
<keyword id="KW-0677">Repeat</keyword>
<keyword id="KW-0720">Serine protease</keyword>
<keyword id="KW-0732">Signal</keyword>
<keyword id="KW-0346">Stress response</keyword>
<evidence type="ECO:0000250" key="1"/>
<evidence type="ECO:0000255" key="2"/>
<evidence type="ECO:0000255" key="3">
    <source>
        <dbReference type="PROSITE-ProRule" id="PRU00143"/>
    </source>
</evidence>
<evidence type="ECO:0000305" key="4"/>
<proteinExistence type="inferred from homology"/>
<reference key="1">
    <citation type="journal article" date="2005" name="Nucleic Acids Res.">
        <title>Genomic blueprint of Hahella chejuensis, a marine microbe producing an algicidal agent.</title>
        <authorList>
            <person name="Jeong H."/>
            <person name="Yim J.H."/>
            <person name="Lee C."/>
            <person name="Choi S.-H."/>
            <person name="Park Y.K."/>
            <person name="Yoon S.H."/>
            <person name="Hur C.-G."/>
            <person name="Kang H.-Y."/>
            <person name="Kim D."/>
            <person name="Lee H.H."/>
            <person name="Park K.H."/>
            <person name="Park S.-H."/>
            <person name="Park H.-S."/>
            <person name="Lee H.K."/>
            <person name="Oh T.K."/>
            <person name="Kim J.F."/>
        </authorList>
    </citation>
    <scope>NUCLEOTIDE SEQUENCE [LARGE SCALE GENOMIC DNA]</scope>
    <source>
        <strain>KCTC 2396</strain>
    </source>
</reference>
<protein>
    <recommendedName>
        <fullName>Probable periplasmic serine endoprotease DegP-like</fullName>
        <ecNumber>3.4.21.107</ecNumber>
    </recommendedName>
    <alternativeName>
        <fullName>Protease Do</fullName>
    </alternativeName>
</protein>
<feature type="signal peptide" evidence="2">
    <location>
        <begin position="1"/>
        <end position="25"/>
    </location>
</feature>
<feature type="chain" id="PRO_0000414221" description="Probable periplasmic serine endoprotease DegP-like">
    <location>
        <begin position="26"/>
        <end position="469"/>
    </location>
</feature>
<feature type="domain" description="PDZ 1" evidence="3">
    <location>
        <begin position="255"/>
        <end position="346"/>
    </location>
</feature>
<feature type="domain" description="PDZ 2" evidence="3">
    <location>
        <begin position="352"/>
        <end position="457"/>
    </location>
</feature>
<feature type="active site" description="Charge relay system" evidence="1">
    <location>
        <position position="108"/>
    </location>
</feature>
<feature type="active site" description="Charge relay system" evidence="2">
    <location>
        <position position="138"/>
    </location>
</feature>
<feature type="active site" description="Charge relay system" evidence="1">
    <location>
        <position position="211"/>
    </location>
</feature>
<feature type="binding site" evidence="1">
    <location>
        <begin position="209"/>
        <end position="211"/>
    </location>
    <ligand>
        <name>substrate</name>
    </ligand>
</feature>
<feature type="binding site" evidence="1">
    <location>
        <begin position="266"/>
        <end position="270"/>
    </location>
    <ligand>
        <name>substrate</name>
    </ligand>
</feature>
<comment type="function">
    <text evidence="1">Might be efficient in the degradation of transiently denatured and unfolded proteins which accumulate in the periplasm following stress conditions.</text>
</comment>
<comment type="catalytic activity">
    <reaction>
        <text>Acts on substrates that are at least partially unfolded. The cleavage site P1 residue is normally between a pair of hydrophobic residues, such as Val-|-Val.</text>
        <dbReference type="EC" id="3.4.21.107"/>
    </reaction>
</comment>
<comment type="subcellular location">
    <subcellularLocation>
        <location evidence="4">Periplasm</location>
    </subcellularLocation>
</comment>
<comment type="similarity">
    <text evidence="4">Belongs to the peptidase S1C family.</text>
</comment>
<dbReference type="EC" id="3.4.21.107"/>
<dbReference type="EMBL" id="CP000155">
    <property type="protein sequence ID" value="ABC28638.1"/>
    <property type="molecule type" value="Genomic_DNA"/>
</dbReference>
<dbReference type="RefSeq" id="WP_011395710.1">
    <property type="nucleotide sequence ID" value="NC_007645.1"/>
</dbReference>
<dbReference type="SMR" id="Q2SL36"/>
<dbReference type="STRING" id="349521.HCH_01795"/>
<dbReference type="KEGG" id="hch:HCH_01795"/>
<dbReference type="eggNOG" id="COG0265">
    <property type="taxonomic scope" value="Bacteria"/>
</dbReference>
<dbReference type="HOGENOM" id="CLU_020120_1_0_6"/>
<dbReference type="OrthoDB" id="9758917at2"/>
<dbReference type="Proteomes" id="UP000000238">
    <property type="component" value="Chromosome"/>
</dbReference>
<dbReference type="GO" id="GO:0042597">
    <property type="term" value="C:periplasmic space"/>
    <property type="evidence" value="ECO:0007669"/>
    <property type="project" value="UniProtKB-SubCell"/>
</dbReference>
<dbReference type="GO" id="GO:0004252">
    <property type="term" value="F:serine-type endopeptidase activity"/>
    <property type="evidence" value="ECO:0007669"/>
    <property type="project" value="InterPro"/>
</dbReference>
<dbReference type="GO" id="GO:0006508">
    <property type="term" value="P:proteolysis"/>
    <property type="evidence" value="ECO:0007669"/>
    <property type="project" value="UniProtKB-KW"/>
</dbReference>
<dbReference type="CDD" id="cd10839">
    <property type="entry name" value="cpPDZ1_DegP-like"/>
    <property type="match status" value="1"/>
</dbReference>
<dbReference type="FunFam" id="2.30.42.10:FF:000037">
    <property type="entry name" value="Periplasmic serine endoprotease DegP-like"/>
    <property type="match status" value="1"/>
</dbReference>
<dbReference type="FunFam" id="2.40.10.120:FF:000007">
    <property type="entry name" value="Periplasmic serine endoprotease DegP-like"/>
    <property type="match status" value="1"/>
</dbReference>
<dbReference type="Gene3D" id="2.30.42.10">
    <property type="match status" value="2"/>
</dbReference>
<dbReference type="Gene3D" id="2.40.10.120">
    <property type="match status" value="1"/>
</dbReference>
<dbReference type="InterPro" id="IPR001478">
    <property type="entry name" value="PDZ"/>
</dbReference>
<dbReference type="InterPro" id="IPR036034">
    <property type="entry name" value="PDZ_sf"/>
</dbReference>
<dbReference type="InterPro" id="IPR011782">
    <property type="entry name" value="Pept_S1C_Do"/>
</dbReference>
<dbReference type="InterPro" id="IPR009003">
    <property type="entry name" value="Peptidase_S1_PA"/>
</dbReference>
<dbReference type="InterPro" id="IPR001940">
    <property type="entry name" value="Peptidase_S1C"/>
</dbReference>
<dbReference type="NCBIfam" id="TIGR02037">
    <property type="entry name" value="degP_htrA_DO"/>
    <property type="match status" value="1"/>
</dbReference>
<dbReference type="PANTHER" id="PTHR22939">
    <property type="entry name" value="SERINE PROTEASE FAMILY S1C HTRA-RELATED"/>
    <property type="match status" value="1"/>
</dbReference>
<dbReference type="PANTHER" id="PTHR22939:SF129">
    <property type="entry name" value="SERINE PROTEASE HTRA2, MITOCHONDRIAL"/>
    <property type="match status" value="1"/>
</dbReference>
<dbReference type="Pfam" id="PF13180">
    <property type="entry name" value="PDZ_2"/>
    <property type="match status" value="2"/>
</dbReference>
<dbReference type="Pfam" id="PF13365">
    <property type="entry name" value="Trypsin_2"/>
    <property type="match status" value="1"/>
</dbReference>
<dbReference type="PRINTS" id="PR00834">
    <property type="entry name" value="PROTEASES2C"/>
</dbReference>
<dbReference type="SMART" id="SM00228">
    <property type="entry name" value="PDZ"/>
    <property type="match status" value="2"/>
</dbReference>
<dbReference type="SUPFAM" id="SSF50156">
    <property type="entry name" value="PDZ domain-like"/>
    <property type="match status" value="2"/>
</dbReference>
<dbReference type="SUPFAM" id="SSF50494">
    <property type="entry name" value="Trypsin-like serine proteases"/>
    <property type="match status" value="1"/>
</dbReference>
<dbReference type="PROSITE" id="PS50106">
    <property type="entry name" value="PDZ"/>
    <property type="match status" value="2"/>
</dbReference>
<accession>Q2SL36</accession>
<gene>
    <name type="primary">mucD</name>
    <name type="ordered locus">HCH_01795</name>
</gene>
<organism>
    <name type="scientific">Hahella chejuensis (strain KCTC 2396)</name>
    <dbReference type="NCBI Taxonomy" id="349521"/>
    <lineage>
        <taxon>Bacteria</taxon>
        <taxon>Pseudomonadati</taxon>
        <taxon>Pseudomonadota</taxon>
        <taxon>Gammaproteobacteria</taxon>
        <taxon>Oceanospirillales</taxon>
        <taxon>Hahellaceae</taxon>
        <taxon>Hahella</taxon>
    </lineage>
</organism>
<sequence length="469" mass="50156">MKVCQKYTAVLLVWLSAVVSMRAGAVDLPDFTGLVERTSPAVVNISTVRKVGDDSAQYYFGGPEQDQIPEFFRHFFGDPYRRRGPQEAQSTGSGFIVSKDGYILTNNHVVAGADEIFVRLMDRRELTAKLIGSDEKSDLAVLKVEADDLPVLNLGKSSELKVGEWVVAIGSPFGFEYTVTAGIVSAKGRSLPNENYVPFIQTDVAINPGNSGGPLFNLEGEVVGINSQIYTRSGGFMGVSFAIPIDVALDVMNQLKDTGAVKRGWLGVLIQEVNKDLAESFNLNKPRGALVAQVMKGSPADKAGLQPGDVIVSYNGNEIGLSSELPHLVGRTSPGQKASMKVVRRGDEMDVAVEIGQLPADDNGVASVPAGQTAPQNNALNLQVRDLTDEEKESMQVAGGVMVAQVFPGPAATAGIQPNDVISSINNKDVETVAQFHEVVEKLPVGKSLPVLIIRQGNPAFIVLKLNNK</sequence>